<sequence>MESTQQMVSSIINTSFEAAVVAATSTLELMGIQYDYNEVFTRVKSKFDYVMDDSGVKNNLLGKAITIDQALNGKFGSAIRNRNWMTDSKTVAKLDEDVNKLRMTLSSKGIDQKMRVLNACFSVKRIPGKSSSIIKCTRLMKDKIERGEVEVDDSYVDEKMEIDTIDWKSRYDQLEKRFESLKQRVSEKYNTWVQKAKKVNENMYSLQNVISQQQNQIADLQQYCNKLEADLQGKFSSLVSSVEWYLRSMELSDDVKNDIEQQLNSIDLINPINAIDDIESLIRNLIQDYDRTFLMLKGLLKQCNYEYAYE</sequence>
<evidence type="ECO:0000255" key="1">
    <source>
        <dbReference type="HAMAP-Rule" id="MF_04094"/>
    </source>
</evidence>
<organismHost>
    <name type="scientific">Homo sapiens</name>
    <name type="common">Human</name>
    <dbReference type="NCBI Taxonomy" id="9606"/>
</organismHost>
<accession>B3SRV3</accession>
<organism>
    <name type="scientific">Rotavirus A (strain RVA/Human/United States/P/1974/G3P1A[8])</name>
    <name type="common">RV-A</name>
    <dbReference type="NCBI Taxonomy" id="10957"/>
    <lineage>
        <taxon>Viruses</taxon>
        <taxon>Riboviria</taxon>
        <taxon>Orthornavirae</taxon>
        <taxon>Duplornaviricota</taxon>
        <taxon>Resentoviricetes</taxon>
        <taxon>Reovirales</taxon>
        <taxon>Sedoreoviridae</taxon>
        <taxon>Rotavirus</taxon>
        <taxon>Rotavirus A</taxon>
    </lineage>
</organism>
<proteinExistence type="inferred from homology"/>
<protein>
    <recommendedName>
        <fullName evidence="1">Non-structural protein 3</fullName>
        <shortName evidence="1">NSP3</shortName>
    </recommendedName>
    <alternativeName>
        <fullName evidence="1">NCVP4</fullName>
    </alternativeName>
    <alternativeName>
        <fullName evidence="1">Non-structural RNA-binding protein 34</fullName>
        <shortName evidence="1">NS34</shortName>
    </alternativeName>
</protein>
<feature type="chain" id="PRO_0000369457" description="Non-structural protein 3">
    <location>
        <begin position="1"/>
        <end position="310"/>
    </location>
</feature>
<feature type="region of interest" description="RNA-binding" evidence="1">
    <location>
        <begin position="1"/>
        <end position="146"/>
    </location>
</feature>
<feature type="region of interest" description="Dimerization" evidence="1">
    <location>
        <begin position="147"/>
        <end position="203"/>
    </location>
</feature>
<feature type="region of interest" description="Interaction with host ZC3H7B" evidence="1">
    <location>
        <begin position="167"/>
        <end position="231"/>
    </location>
</feature>
<feature type="region of interest" description="Interaction with host EIF4G1" evidence="1">
    <location>
        <begin position="205"/>
        <end position="310"/>
    </location>
</feature>
<feature type="coiled-coil region" evidence="1">
    <location>
        <begin position="163"/>
        <end position="234"/>
    </location>
</feature>
<keyword id="KW-0175">Coiled coil</keyword>
<keyword id="KW-1035">Host cytoplasm</keyword>
<keyword id="KW-0945">Host-virus interaction</keyword>
<keyword id="KW-0694">RNA-binding</keyword>
<keyword id="KW-0810">Translation regulation</keyword>
<reference key="1">
    <citation type="journal article" date="2008" name="J. Virol.">
        <title>Group A human rotavirus genomics: evidence that gene constellations are influenced by viral protein interactions.</title>
        <authorList>
            <person name="Heiman E.M."/>
            <person name="McDonald S.M."/>
            <person name="Barro M."/>
            <person name="Taraporewala Z.F."/>
            <person name="Bar-Magen T."/>
            <person name="Patton J.T."/>
        </authorList>
    </citation>
    <scope>NUCLEOTIDE SEQUENCE [GENOMIC RNA]</scope>
</reference>
<comment type="function">
    <text evidence="1">Plays an important role in stimulating the translation of viral mRNAs. These mRNAs are capped but not polyadenylated, instead terminating in a conserved sequence 'GACC' at the 3' that is recognized by NSP3, which competes with host PABPC1 for EIF4G1 binding. The interaction between NSP3 and host EIF4G1 stabilizes the EIF4E-EIF4G1 interaction, thereby facilitating the initiation of capped mRNA translation.</text>
</comment>
<comment type="subunit">
    <text evidence="1">Homodimer. Interacts (via the coiled-coil region) with host ZC3H7B (via LD motif). Interacts with host EIF4G1.</text>
</comment>
<comment type="subcellular location">
    <subcellularLocation>
        <location evidence="1">Host cytoplasm</location>
    </subcellularLocation>
</comment>
<comment type="similarity">
    <text evidence="1">Belongs to the rotavirus NSP3 family.</text>
</comment>
<dbReference type="EMBL" id="EF672600">
    <property type="protein sequence ID" value="ABV53278.1"/>
    <property type="molecule type" value="Genomic_RNA"/>
</dbReference>
<dbReference type="SMR" id="B3SRV3"/>
<dbReference type="Proteomes" id="UP000007047">
    <property type="component" value="Genome"/>
</dbReference>
<dbReference type="GO" id="GO:0030430">
    <property type="term" value="C:host cell cytoplasm"/>
    <property type="evidence" value="ECO:0007669"/>
    <property type="project" value="UniProtKB-SubCell"/>
</dbReference>
<dbReference type="GO" id="GO:0003723">
    <property type="term" value="F:RNA binding"/>
    <property type="evidence" value="ECO:0007669"/>
    <property type="project" value="UniProtKB-UniRule"/>
</dbReference>
<dbReference type="GO" id="GO:0006417">
    <property type="term" value="P:regulation of translation"/>
    <property type="evidence" value="ECO:0007669"/>
    <property type="project" value="UniProtKB-UniRule"/>
</dbReference>
<dbReference type="CDD" id="cd20714">
    <property type="entry name" value="NSP3_rotavirus"/>
    <property type="match status" value="1"/>
</dbReference>
<dbReference type="Gene3D" id="3.30.70.1610">
    <property type="match status" value="1"/>
</dbReference>
<dbReference type="Gene3D" id="1.20.5.970">
    <property type="entry name" value="Nonstructural RNA-binding protein"/>
    <property type="match status" value="1"/>
</dbReference>
<dbReference type="Gene3D" id="6.10.280.20">
    <property type="entry name" value="Rotavirus non-structural protein NSP3, N-terminal domain"/>
    <property type="match status" value="1"/>
</dbReference>
<dbReference type="HAMAP" id="MF_04094">
    <property type="entry name" value="ROTA_A_NSP3"/>
    <property type="match status" value="1"/>
</dbReference>
<dbReference type="HAMAP" id="MF_04090">
    <property type="entry name" value="ROTA_NSP3"/>
    <property type="match status" value="1"/>
</dbReference>
<dbReference type="InterPro" id="IPR042519">
    <property type="entry name" value="NSP3_N_rotavirus"/>
</dbReference>
<dbReference type="InterPro" id="IPR036082">
    <property type="entry name" value="NSP3_sf"/>
</dbReference>
<dbReference type="InterPro" id="IPR002873">
    <property type="entry name" value="Rotavirus_NSP3"/>
</dbReference>
<dbReference type="Pfam" id="PF01665">
    <property type="entry name" value="Rota_NSP3"/>
    <property type="match status" value="1"/>
</dbReference>
<dbReference type="SUPFAM" id="SSF69903">
    <property type="entry name" value="NSP3 homodimer"/>
    <property type="match status" value="1"/>
</dbReference>
<dbReference type="SUPFAM" id="SSF58030">
    <property type="entry name" value="Rotavirus nonstructural proteins"/>
    <property type="match status" value="1"/>
</dbReference>
<name>NSP3_ROTHP</name>